<accession>Q75FQ8</accession>
<organism>
    <name type="scientific">Leptospira interrogans serogroup Icterohaemorrhagiae serovar copenhageni (strain Fiocruz L1-130)</name>
    <dbReference type="NCBI Taxonomy" id="267671"/>
    <lineage>
        <taxon>Bacteria</taxon>
        <taxon>Pseudomonadati</taxon>
        <taxon>Spirochaetota</taxon>
        <taxon>Spirochaetia</taxon>
        <taxon>Leptospirales</taxon>
        <taxon>Leptospiraceae</taxon>
        <taxon>Leptospira</taxon>
    </lineage>
</organism>
<gene>
    <name evidence="1" type="primary">cbiA</name>
    <name type="synonym">cobB</name>
    <name type="ordered locus">LIC_20124</name>
</gene>
<comment type="function">
    <text evidence="1">Catalyzes the ATP-dependent amidation of the two carboxylate groups at positions a and c of cobyrinate, using either L-glutamine or ammonia as the nitrogen source.</text>
</comment>
<comment type="catalytic activity">
    <reaction evidence="1">
        <text>cob(II)yrinate + 2 L-glutamine + 2 ATP + 2 H2O = cob(II)yrinate a,c diamide + 2 L-glutamate + 2 ADP + 2 phosphate + 2 H(+)</text>
        <dbReference type="Rhea" id="RHEA:26289"/>
        <dbReference type="ChEBI" id="CHEBI:15377"/>
        <dbReference type="ChEBI" id="CHEBI:15378"/>
        <dbReference type="ChEBI" id="CHEBI:29985"/>
        <dbReference type="ChEBI" id="CHEBI:30616"/>
        <dbReference type="ChEBI" id="CHEBI:43474"/>
        <dbReference type="ChEBI" id="CHEBI:58359"/>
        <dbReference type="ChEBI" id="CHEBI:58537"/>
        <dbReference type="ChEBI" id="CHEBI:58894"/>
        <dbReference type="ChEBI" id="CHEBI:456216"/>
        <dbReference type="EC" id="6.3.5.11"/>
    </reaction>
</comment>
<comment type="cofactor">
    <cofactor evidence="1">
        <name>Mg(2+)</name>
        <dbReference type="ChEBI" id="CHEBI:18420"/>
    </cofactor>
</comment>
<comment type="pathway">
    <text evidence="1">Cofactor biosynthesis; adenosylcobalamin biosynthesis; cob(II)yrinate a,c-diamide from sirohydrochlorin (anaerobic route): step 10/10.</text>
</comment>
<comment type="domain">
    <text evidence="1">Comprises of two domains. The C-terminal domain contains the binding site for glutamine and catalyzes the hydrolysis of this substrate to glutamate and ammonia. The N-terminal domain is anticipated to bind ATP and cobyrinate and catalyzes the ultimate synthesis of the diamide product. The ammonia produced via the glutaminase domain is probably translocated to the adjacent domain via a molecular tunnel, where it reacts with an activated intermediate.</text>
</comment>
<comment type="miscellaneous">
    <text evidence="1">The a and c carboxylates of cobyrinate are activated for nucleophilic attack via formation of a phosphorylated intermediate by ATP. CbiA catalyzes first the amidation of the c-carboxylate, and then that of the a-carboxylate.</text>
</comment>
<comment type="similarity">
    <text evidence="1">Belongs to the CobB/CbiA family.</text>
</comment>
<keyword id="KW-0067">ATP-binding</keyword>
<keyword id="KW-0169">Cobalamin biosynthesis</keyword>
<keyword id="KW-0315">Glutamine amidotransferase</keyword>
<keyword id="KW-0436">Ligase</keyword>
<keyword id="KW-0460">Magnesium</keyword>
<keyword id="KW-0547">Nucleotide-binding</keyword>
<feature type="chain" id="PRO_0000141257" description="Cobyrinate a,c-diamide synthase">
    <location>
        <begin position="1"/>
        <end position="454"/>
    </location>
</feature>
<feature type="domain" description="GATase cobBQ-type" evidence="1">
    <location>
        <begin position="247"/>
        <end position="442"/>
    </location>
</feature>
<feature type="active site" description="Nucleophile" evidence="1">
    <location>
        <position position="329"/>
    </location>
</feature>
<feature type="site" description="Increases nucleophilicity of active site Cys" evidence="1">
    <location>
        <position position="434"/>
    </location>
</feature>
<sequence length="454" mass="50193">MNIKIPRIVIGGTGSGVGKTTIALALTQILRKKGLKVATFKCGPDYLDPTYHSRASQKICHNLDGWLMGKESVLNTFYQACHNVDIAIIEGMMGLFDGHSPNSEIGSTAEIAKWLASPVLVVLDTRGMARTVSAILKGLKIFDPDLNLAGAFANFTGSPSHIQLLKDASTEVPILGGLCKHSEQTFPERHLGLYSASEENVSEEKFNFWGEEGEKSLEVNSILEIANSAPEISIPVSNINTTLKRCKIGIAMDSAFHFYYEENLMRLRQAGAELVFFSPLSDSRLTDVDGLYFGGGYPEVFAPTLSKNKSLLNYIRDLSYKNIPIYAECGGLMYLSKGIKLVEGEFFPMLGLISATSIMEKKLKALGYVEVTTKKETIFGEVGLRFRGHQFRYSDLELDESNPIELVYNLRKRKSDQVSEEGYSKNSILASYIHAHWASNPNLAEGFVQSCLRK</sequence>
<proteinExistence type="inferred from homology"/>
<dbReference type="EC" id="6.3.5.11" evidence="1"/>
<dbReference type="EMBL" id="AE016824">
    <property type="protein sequence ID" value="AAS72152.1"/>
    <property type="molecule type" value="Genomic_DNA"/>
</dbReference>
<dbReference type="RefSeq" id="WP_001022069.1">
    <property type="nucleotide sequence ID" value="NC_005824.1"/>
</dbReference>
<dbReference type="SMR" id="Q75FQ8"/>
<dbReference type="KEGG" id="lic:LIC_20124"/>
<dbReference type="HOGENOM" id="CLU_022752_2_0_12"/>
<dbReference type="UniPathway" id="UPA00148">
    <property type="reaction ID" value="UER00231"/>
</dbReference>
<dbReference type="Proteomes" id="UP000007037">
    <property type="component" value="Chromosome II"/>
</dbReference>
<dbReference type="GO" id="GO:0005524">
    <property type="term" value="F:ATP binding"/>
    <property type="evidence" value="ECO:0007669"/>
    <property type="project" value="UniProtKB-UniRule"/>
</dbReference>
<dbReference type="GO" id="GO:0042242">
    <property type="term" value="F:cobyrinic acid a,c-diamide synthase activity"/>
    <property type="evidence" value="ECO:0007669"/>
    <property type="project" value="UniProtKB-UniRule"/>
</dbReference>
<dbReference type="GO" id="GO:0009236">
    <property type="term" value="P:cobalamin biosynthetic process"/>
    <property type="evidence" value="ECO:0007669"/>
    <property type="project" value="UniProtKB-UniRule"/>
</dbReference>
<dbReference type="CDD" id="cd05388">
    <property type="entry name" value="CobB_N"/>
    <property type="match status" value="1"/>
</dbReference>
<dbReference type="CDD" id="cd03130">
    <property type="entry name" value="GATase1_CobB"/>
    <property type="match status" value="1"/>
</dbReference>
<dbReference type="Gene3D" id="3.40.50.880">
    <property type="match status" value="1"/>
</dbReference>
<dbReference type="Gene3D" id="3.40.50.300">
    <property type="entry name" value="P-loop containing nucleotide triphosphate hydrolases"/>
    <property type="match status" value="2"/>
</dbReference>
<dbReference type="HAMAP" id="MF_00027">
    <property type="entry name" value="CobB_CbiA"/>
    <property type="match status" value="1"/>
</dbReference>
<dbReference type="InterPro" id="IPR004484">
    <property type="entry name" value="CbiA/CobB_synth"/>
</dbReference>
<dbReference type="InterPro" id="IPR029062">
    <property type="entry name" value="Class_I_gatase-like"/>
</dbReference>
<dbReference type="InterPro" id="IPR002586">
    <property type="entry name" value="CobQ/CobB/MinD/ParA_Nub-bd_dom"/>
</dbReference>
<dbReference type="InterPro" id="IPR011698">
    <property type="entry name" value="GATase_3"/>
</dbReference>
<dbReference type="InterPro" id="IPR027417">
    <property type="entry name" value="P-loop_NTPase"/>
</dbReference>
<dbReference type="NCBIfam" id="TIGR00379">
    <property type="entry name" value="cobB"/>
    <property type="match status" value="1"/>
</dbReference>
<dbReference type="NCBIfam" id="NF002204">
    <property type="entry name" value="PRK01077.1"/>
    <property type="match status" value="1"/>
</dbReference>
<dbReference type="PANTHER" id="PTHR43873">
    <property type="entry name" value="COBYRINATE A,C-DIAMIDE SYNTHASE"/>
    <property type="match status" value="1"/>
</dbReference>
<dbReference type="PANTHER" id="PTHR43873:SF1">
    <property type="entry name" value="COBYRINATE A,C-DIAMIDE SYNTHASE"/>
    <property type="match status" value="1"/>
</dbReference>
<dbReference type="Pfam" id="PF01656">
    <property type="entry name" value="CbiA"/>
    <property type="match status" value="1"/>
</dbReference>
<dbReference type="Pfam" id="PF07685">
    <property type="entry name" value="GATase_3"/>
    <property type="match status" value="1"/>
</dbReference>
<dbReference type="SUPFAM" id="SSF52317">
    <property type="entry name" value="Class I glutamine amidotransferase-like"/>
    <property type="match status" value="1"/>
</dbReference>
<dbReference type="SUPFAM" id="SSF52540">
    <property type="entry name" value="P-loop containing nucleoside triphosphate hydrolases"/>
    <property type="match status" value="1"/>
</dbReference>
<dbReference type="PROSITE" id="PS51274">
    <property type="entry name" value="GATASE_COBBQ"/>
    <property type="match status" value="1"/>
</dbReference>
<protein>
    <recommendedName>
        <fullName evidence="1">Cobyrinate a,c-diamide synthase</fullName>
        <ecNumber evidence="1">6.3.5.11</ecNumber>
    </recommendedName>
    <alternativeName>
        <fullName evidence="1">Cobyrinic acid a,c-diamide synthetase</fullName>
    </alternativeName>
</protein>
<reference key="1">
    <citation type="journal article" date="2004" name="J. Bacteriol.">
        <title>Comparative genomics of two Leptospira interrogans serovars reveals novel insights into physiology and pathogenesis.</title>
        <authorList>
            <person name="Nascimento A.L.T.O."/>
            <person name="Ko A.I."/>
            <person name="Martins E.A.L."/>
            <person name="Monteiro-Vitorello C.B."/>
            <person name="Ho P.L."/>
            <person name="Haake D.A."/>
            <person name="Verjovski-Almeida S."/>
            <person name="Hartskeerl R.A."/>
            <person name="Marques M.V."/>
            <person name="Oliveira M.C."/>
            <person name="Menck C.F.M."/>
            <person name="Leite L.C.C."/>
            <person name="Carrer H."/>
            <person name="Coutinho L.L."/>
            <person name="Degrave W.M."/>
            <person name="Dellagostin O.A."/>
            <person name="El-Dorry H."/>
            <person name="Ferro E.S."/>
            <person name="Ferro M.I.T."/>
            <person name="Furlan L.R."/>
            <person name="Gamberini M."/>
            <person name="Giglioti E.A."/>
            <person name="Goes-Neto A."/>
            <person name="Goldman G.H."/>
            <person name="Goldman M.H.S."/>
            <person name="Harakava R."/>
            <person name="Jeronimo S.M.B."/>
            <person name="Junqueira-de-Azevedo I.L.M."/>
            <person name="Kimura E.T."/>
            <person name="Kuramae E.E."/>
            <person name="Lemos E.G.M."/>
            <person name="Lemos M.V.F."/>
            <person name="Marino C.L."/>
            <person name="Nunes L.R."/>
            <person name="de Oliveira R.C."/>
            <person name="Pereira G.G."/>
            <person name="Reis M.S."/>
            <person name="Schriefer A."/>
            <person name="Siqueira W.J."/>
            <person name="Sommer P."/>
            <person name="Tsai S.M."/>
            <person name="Simpson A.J.G."/>
            <person name="Ferro J.A."/>
            <person name="Camargo L.E.A."/>
            <person name="Kitajima J.P."/>
            <person name="Setubal J.C."/>
            <person name="Van Sluys M.A."/>
        </authorList>
    </citation>
    <scope>NUCLEOTIDE SEQUENCE [LARGE SCALE GENOMIC DNA]</scope>
    <source>
        <strain>Fiocruz L1-130</strain>
    </source>
</reference>
<name>CBIA_LEPIC</name>
<evidence type="ECO:0000255" key="1">
    <source>
        <dbReference type="HAMAP-Rule" id="MF_00027"/>
    </source>
</evidence>